<evidence type="ECO:0000255" key="1">
    <source>
        <dbReference type="HAMAP-Rule" id="MF_00171"/>
    </source>
</evidence>
<proteinExistence type="inferred from homology"/>
<comment type="function">
    <text evidence="1">Formation of pseudouridine at positions 38, 39 and 40 in the anticodon stem and loop of transfer RNAs.</text>
</comment>
<comment type="catalytic activity">
    <reaction evidence="1">
        <text>uridine(38/39/40) in tRNA = pseudouridine(38/39/40) in tRNA</text>
        <dbReference type="Rhea" id="RHEA:22376"/>
        <dbReference type="Rhea" id="RHEA-COMP:10085"/>
        <dbReference type="Rhea" id="RHEA-COMP:10087"/>
        <dbReference type="ChEBI" id="CHEBI:65314"/>
        <dbReference type="ChEBI" id="CHEBI:65315"/>
        <dbReference type="EC" id="5.4.99.12"/>
    </reaction>
</comment>
<comment type="subunit">
    <text evidence="1">Homodimer.</text>
</comment>
<comment type="similarity">
    <text evidence="1">Belongs to the tRNA pseudouridine synthase TruA family.</text>
</comment>
<keyword id="KW-0413">Isomerase</keyword>
<keyword id="KW-1185">Reference proteome</keyword>
<keyword id="KW-0819">tRNA processing</keyword>
<reference key="1">
    <citation type="journal article" date="2003" name="Microbiology">
        <title>The complete genome sequence of the avian pathogen Mycoplasma gallisepticum strain R(low).</title>
        <authorList>
            <person name="Papazisi L."/>
            <person name="Gorton T.S."/>
            <person name="Kutish G."/>
            <person name="Markham P.F."/>
            <person name="Browning G.F."/>
            <person name="Nguyen D.K."/>
            <person name="Swartzell S."/>
            <person name="Madan A."/>
            <person name="Mahairas G."/>
            <person name="Geary S.J."/>
        </authorList>
    </citation>
    <scope>NUCLEOTIDE SEQUENCE [LARGE SCALE GENOMIC DNA]</scope>
    <source>
        <strain>R(low / passage 15 / clone 2)</strain>
    </source>
</reference>
<feature type="chain" id="PRO_0000057408" description="tRNA pseudouridine synthase A">
    <location>
        <begin position="1"/>
        <end position="263"/>
    </location>
</feature>
<feature type="active site" description="Nucleophile" evidence="1">
    <location>
        <position position="73"/>
    </location>
</feature>
<feature type="binding site" evidence="1">
    <location>
        <position position="131"/>
    </location>
    <ligand>
        <name>substrate</name>
    </ligand>
</feature>
<dbReference type="EC" id="5.4.99.12" evidence="1"/>
<dbReference type="EMBL" id="AE015450">
    <property type="protein sequence ID" value="AAP56926.2"/>
    <property type="molecule type" value="Genomic_DNA"/>
</dbReference>
<dbReference type="RefSeq" id="WP_011113833.1">
    <property type="nucleotide sequence ID" value="NC_004829.2"/>
</dbReference>
<dbReference type="SMR" id="Q7NAQ9"/>
<dbReference type="GeneID" id="93510410"/>
<dbReference type="KEGG" id="mga:MGA_1331d"/>
<dbReference type="PATRIC" id="fig|233150.7.peg.648"/>
<dbReference type="HOGENOM" id="CLU_014673_0_1_14"/>
<dbReference type="OrthoDB" id="9811823at2"/>
<dbReference type="Proteomes" id="UP000001418">
    <property type="component" value="Chromosome"/>
</dbReference>
<dbReference type="GO" id="GO:0003723">
    <property type="term" value="F:RNA binding"/>
    <property type="evidence" value="ECO:0007669"/>
    <property type="project" value="InterPro"/>
</dbReference>
<dbReference type="GO" id="GO:0160147">
    <property type="term" value="F:tRNA pseudouridine(38-40) synthase activity"/>
    <property type="evidence" value="ECO:0007669"/>
    <property type="project" value="UniProtKB-EC"/>
</dbReference>
<dbReference type="GO" id="GO:0031119">
    <property type="term" value="P:tRNA pseudouridine synthesis"/>
    <property type="evidence" value="ECO:0007669"/>
    <property type="project" value="UniProtKB-UniRule"/>
</dbReference>
<dbReference type="CDD" id="cd02570">
    <property type="entry name" value="PseudoU_synth_EcTruA"/>
    <property type="match status" value="1"/>
</dbReference>
<dbReference type="Gene3D" id="3.30.70.660">
    <property type="entry name" value="Pseudouridine synthase I, catalytic domain, C-terminal subdomain"/>
    <property type="match status" value="1"/>
</dbReference>
<dbReference type="Gene3D" id="3.30.70.580">
    <property type="entry name" value="Pseudouridine synthase I, catalytic domain, N-terminal subdomain"/>
    <property type="match status" value="1"/>
</dbReference>
<dbReference type="HAMAP" id="MF_00171">
    <property type="entry name" value="TruA"/>
    <property type="match status" value="1"/>
</dbReference>
<dbReference type="InterPro" id="IPR020103">
    <property type="entry name" value="PsdUridine_synth_cat_dom_sf"/>
</dbReference>
<dbReference type="InterPro" id="IPR001406">
    <property type="entry name" value="PsdUridine_synth_TruA"/>
</dbReference>
<dbReference type="InterPro" id="IPR020097">
    <property type="entry name" value="PsdUridine_synth_TruA_a/b_dom"/>
</dbReference>
<dbReference type="InterPro" id="IPR020095">
    <property type="entry name" value="PsdUridine_synth_TruA_C"/>
</dbReference>
<dbReference type="InterPro" id="IPR020094">
    <property type="entry name" value="TruA/RsuA/RluB/E/F_N"/>
</dbReference>
<dbReference type="NCBIfam" id="TIGR00071">
    <property type="entry name" value="hisT_truA"/>
    <property type="match status" value="1"/>
</dbReference>
<dbReference type="PANTHER" id="PTHR11142">
    <property type="entry name" value="PSEUDOURIDYLATE SYNTHASE"/>
    <property type="match status" value="1"/>
</dbReference>
<dbReference type="PANTHER" id="PTHR11142:SF0">
    <property type="entry name" value="TRNA PSEUDOURIDINE SYNTHASE-LIKE 1"/>
    <property type="match status" value="1"/>
</dbReference>
<dbReference type="Pfam" id="PF01416">
    <property type="entry name" value="PseudoU_synth_1"/>
    <property type="match status" value="2"/>
</dbReference>
<dbReference type="PIRSF" id="PIRSF001430">
    <property type="entry name" value="tRNA_psdUrid_synth"/>
    <property type="match status" value="1"/>
</dbReference>
<dbReference type="SUPFAM" id="SSF55120">
    <property type="entry name" value="Pseudouridine synthase"/>
    <property type="match status" value="1"/>
</dbReference>
<protein>
    <recommendedName>
        <fullName evidence="1">tRNA pseudouridine synthase A</fullName>
        <ecNumber evidence="1">5.4.99.12</ecNumber>
    </recommendedName>
    <alternativeName>
        <fullName evidence="1">tRNA pseudouridine(38-40) synthase</fullName>
    </alternativeName>
    <alternativeName>
        <fullName evidence="1">tRNA pseudouridylate synthase I</fullName>
    </alternativeName>
    <alternativeName>
        <fullName evidence="1">tRNA-uridine isomerase I</fullName>
    </alternativeName>
</protein>
<name>TRUA_MYCGA</name>
<organism>
    <name type="scientific">Mycoplasmoides gallisepticum (strain R(low / passage 15 / clone 2))</name>
    <name type="common">Mycoplasma gallisepticum</name>
    <dbReference type="NCBI Taxonomy" id="710127"/>
    <lineage>
        <taxon>Bacteria</taxon>
        <taxon>Bacillati</taxon>
        <taxon>Mycoplasmatota</taxon>
        <taxon>Mycoplasmoidales</taxon>
        <taxon>Mycoplasmoidaceae</taxon>
        <taxon>Mycoplasmoides</taxon>
    </lineage>
</organism>
<sequence length="263" mass="31104">MVYLVHQNEWRSVWVKTLAKLNKNVLINISYHGTKFHGYAVQNDYETVQSKLQDALAWIYESKIYVNASGRTDKGVHAINQYISFYIDDRISLEKLREILNRYGQNKWYIKWIKEVDRNFHARFSAKAKTYLYLIDYCANNPLFYDHAWIVNFQLDFNLIEKAIPILEGTHNFWSFSTADKDKGLRTIHKIDLKQEDNKVYIYITGDGFLRSMVRMIVGALYNIGIKKYDLNHLKWLLDNPKKGRAITKAPASGLYLYEVYYE</sequence>
<gene>
    <name evidence="1" type="primary">truA</name>
    <name type="ordered locus">MYCGA5760</name>
    <name type="ORF">MGA_1331d</name>
</gene>
<accession>Q7NAQ9</accession>